<accession>B1LAR0</accession>
<keyword id="KW-0963">Cytoplasm</keyword>
<keyword id="KW-0251">Elongation factor</keyword>
<keyword id="KW-0648">Protein biosynthesis</keyword>
<proteinExistence type="inferred from homology"/>
<protein>
    <recommendedName>
        <fullName evidence="1">Elongation factor P</fullName>
        <shortName evidence="1">EF-P</shortName>
    </recommendedName>
</protein>
<comment type="function">
    <text evidence="1">Involved in peptide bond synthesis. Stimulates efficient translation and peptide-bond synthesis on native or reconstituted 70S ribosomes in vitro. Probably functions indirectly by altering the affinity of the ribosome for aminoacyl-tRNA, thus increasing their reactivity as acceptors for peptidyl transferase.</text>
</comment>
<comment type="pathway">
    <text evidence="1">Protein biosynthesis; polypeptide chain elongation.</text>
</comment>
<comment type="subcellular location">
    <subcellularLocation>
        <location evidence="1">Cytoplasm</location>
    </subcellularLocation>
</comment>
<comment type="similarity">
    <text evidence="1">Belongs to the elongation factor P family.</text>
</comment>
<dbReference type="EMBL" id="CP000969">
    <property type="protein sequence ID" value="ACB09408.1"/>
    <property type="molecule type" value="Genomic_DNA"/>
</dbReference>
<dbReference type="RefSeq" id="WP_011943598.1">
    <property type="nucleotide sequence ID" value="NC_010483.1"/>
</dbReference>
<dbReference type="SMR" id="B1LAR0"/>
<dbReference type="KEGG" id="trq:TRQ2_1061"/>
<dbReference type="HOGENOM" id="CLU_074944_0_1_0"/>
<dbReference type="UniPathway" id="UPA00345"/>
<dbReference type="Proteomes" id="UP000001687">
    <property type="component" value="Chromosome"/>
</dbReference>
<dbReference type="GO" id="GO:0005737">
    <property type="term" value="C:cytoplasm"/>
    <property type="evidence" value="ECO:0007669"/>
    <property type="project" value="UniProtKB-SubCell"/>
</dbReference>
<dbReference type="GO" id="GO:0003746">
    <property type="term" value="F:translation elongation factor activity"/>
    <property type="evidence" value="ECO:0007669"/>
    <property type="project" value="UniProtKB-UniRule"/>
</dbReference>
<dbReference type="GO" id="GO:0043043">
    <property type="term" value="P:peptide biosynthetic process"/>
    <property type="evidence" value="ECO:0007669"/>
    <property type="project" value="InterPro"/>
</dbReference>
<dbReference type="CDD" id="cd04470">
    <property type="entry name" value="S1_EF-P_repeat_1"/>
    <property type="match status" value="1"/>
</dbReference>
<dbReference type="CDD" id="cd05794">
    <property type="entry name" value="S1_EF-P_repeat_2"/>
    <property type="match status" value="1"/>
</dbReference>
<dbReference type="FunFam" id="2.30.30.30:FF:000003">
    <property type="entry name" value="Elongation factor P"/>
    <property type="match status" value="1"/>
</dbReference>
<dbReference type="FunFam" id="2.40.50.140:FF:000004">
    <property type="entry name" value="Elongation factor P"/>
    <property type="match status" value="1"/>
</dbReference>
<dbReference type="FunFam" id="2.40.50.140:FF:000009">
    <property type="entry name" value="Elongation factor P"/>
    <property type="match status" value="1"/>
</dbReference>
<dbReference type="Gene3D" id="2.30.30.30">
    <property type="match status" value="1"/>
</dbReference>
<dbReference type="Gene3D" id="2.40.50.140">
    <property type="entry name" value="Nucleic acid-binding proteins"/>
    <property type="match status" value="2"/>
</dbReference>
<dbReference type="HAMAP" id="MF_00141">
    <property type="entry name" value="EF_P"/>
    <property type="match status" value="1"/>
</dbReference>
<dbReference type="InterPro" id="IPR015365">
    <property type="entry name" value="Elong-fact-P_C"/>
</dbReference>
<dbReference type="InterPro" id="IPR012340">
    <property type="entry name" value="NA-bd_OB-fold"/>
</dbReference>
<dbReference type="InterPro" id="IPR014722">
    <property type="entry name" value="Rib_uL2_dom2"/>
</dbReference>
<dbReference type="InterPro" id="IPR020599">
    <property type="entry name" value="Transl_elong_fac_P/YeiP"/>
</dbReference>
<dbReference type="InterPro" id="IPR013185">
    <property type="entry name" value="Transl_elong_KOW-like"/>
</dbReference>
<dbReference type="InterPro" id="IPR001059">
    <property type="entry name" value="Transl_elong_P/YeiP_cen"/>
</dbReference>
<dbReference type="InterPro" id="IPR013852">
    <property type="entry name" value="Transl_elong_P/YeiP_CS"/>
</dbReference>
<dbReference type="InterPro" id="IPR011768">
    <property type="entry name" value="Transl_elongation_fac_P"/>
</dbReference>
<dbReference type="InterPro" id="IPR008991">
    <property type="entry name" value="Translation_prot_SH3-like_sf"/>
</dbReference>
<dbReference type="NCBIfam" id="TIGR00038">
    <property type="entry name" value="efp"/>
    <property type="match status" value="1"/>
</dbReference>
<dbReference type="NCBIfam" id="NF001810">
    <property type="entry name" value="PRK00529.1"/>
    <property type="match status" value="1"/>
</dbReference>
<dbReference type="PANTHER" id="PTHR30053">
    <property type="entry name" value="ELONGATION FACTOR P"/>
    <property type="match status" value="1"/>
</dbReference>
<dbReference type="PANTHER" id="PTHR30053:SF12">
    <property type="entry name" value="ELONGATION FACTOR P (EF-P) FAMILY PROTEIN"/>
    <property type="match status" value="1"/>
</dbReference>
<dbReference type="Pfam" id="PF01132">
    <property type="entry name" value="EFP"/>
    <property type="match status" value="1"/>
</dbReference>
<dbReference type="Pfam" id="PF08207">
    <property type="entry name" value="EFP_N"/>
    <property type="match status" value="1"/>
</dbReference>
<dbReference type="Pfam" id="PF09285">
    <property type="entry name" value="Elong-fact-P_C"/>
    <property type="match status" value="1"/>
</dbReference>
<dbReference type="PIRSF" id="PIRSF005901">
    <property type="entry name" value="EF-P"/>
    <property type="match status" value="1"/>
</dbReference>
<dbReference type="SMART" id="SM01185">
    <property type="entry name" value="EFP"/>
    <property type="match status" value="1"/>
</dbReference>
<dbReference type="SMART" id="SM00841">
    <property type="entry name" value="Elong-fact-P_C"/>
    <property type="match status" value="1"/>
</dbReference>
<dbReference type="SUPFAM" id="SSF50249">
    <property type="entry name" value="Nucleic acid-binding proteins"/>
    <property type="match status" value="2"/>
</dbReference>
<dbReference type="SUPFAM" id="SSF50104">
    <property type="entry name" value="Translation proteins SH3-like domain"/>
    <property type="match status" value="1"/>
</dbReference>
<dbReference type="PROSITE" id="PS01275">
    <property type="entry name" value="EFP"/>
    <property type="match status" value="1"/>
</dbReference>
<name>EFP_THESQ</name>
<gene>
    <name evidence="1" type="primary">efp</name>
    <name type="ordered locus">TRQ2_1061</name>
</gene>
<evidence type="ECO:0000255" key="1">
    <source>
        <dbReference type="HAMAP-Rule" id="MF_00141"/>
    </source>
</evidence>
<feature type="chain" id="PRO_1000096219" description="Elongation factor P">
    <location>
        <begin position="1"/>
        <end position="185"/>
    </location>
</feature>
<organism>
    <name type="scientific">Thermotoga sp. (strain RQ2)</name>
    <dbReference type="NCBI Taxonomy" id="126740"/>
    <lineage>
        <taxon>Bacteria</taxon>
        <taxon>Thermotogati</taxon>
        <taxon>Thermotogota</taxon>
        <taxon>Thermotogae</taxon>
        <taxon>Thermotogales</taxon>
        <taxon>Thermotogaceae</taxon>
        <taxon>Thermotoga</taxon>
    </lineage>
</organism>
<reference key="1">
    <citation type="journal article" date="2011" name="J. Bacteriol.">
        <title>Genome sequence of Thermotoga sp. strain RQ2, a hyperthermophilic bacterium isolated from a geothermally heated region of the seafloor near Ribeira Quente, the Azores.</title>
        <authorList>
            <person name="Swithers K.S."/>
            <person name="DiPippo J.L."/>
            <person name="Bruce D.C."/>
            <person name="Detter C."/>
            <person name="Tapia R."/>
            <person name="Han S."/>
            <person name="Saunders E."/>
            <person name="Goodwin L.A."/>
            <person name="Han J."/>
            <person name="Woyke T."/>
            <person name="Pitluck S."/>
            <person name="Pennacchio L."/>
            <person name="Nolan M."/>
            <person name="Mikhailova N."/>
            <person name="Lykidis A."/>
            <person name="Land M.L."/>
            <person name="Brettin T."/>
            <person name="Stetter K.O."/>
            <person name="Nelson K.E."/>
            <person name="Gogarten J.P."/>
            <person name="Noll K.M."/>
        </authorList>
    </citation>
    <scope>NUCLEOTIDE SEQUENCE [LARGE SCALE GENOMIC DNA]</scope>
    <source>
        <strain>RQ2</strain>
    </source>
</reference>
<sequence length="185" mass="20796">MIEVGDLKKGMFIIYDGEIYRVLEASKHFMGRGSGLIRTKLKNVKTGLVREVNFPSGDKVPEAELSFRKAQYLYRDGDHYYFMTLDDYEQYALSEEEIGDAKYYLVENMEVDLVFHEGTPIGIELPTTVELTVVETEPSFKGDTVSGGGKPAVLETGLKITVPYFIEVGDKIKVDTRTGEYVGRA</sequence>